<protein>
    <recommendedName>
        <fullName evidence="1">Ribonuclease PH</fullName>
        <shortName evidence="1">RNase PH</shortName>
        <ecNumber evidence="1">2.7.7.56</ecNumber>
    </recommendedName>
    <alternativeName>
        <fullName evidence="1">tRNA nucleotidyltransferase</fullName>
    </alternativeName>
</protein>
<reference key="1">
    <citation type="submission" date="2008-02" db="EMBL/GenBank/DDBJ databases">
        <title>Complete sequence of Escherichia coli C str. ATCC 8739.</title>
        <authorList>
            <person name="Copeland A."/>
            <person name="Lucas S."/>
            <person name="Lapidus A."/>
            <person name="Glavina del Rio T."/>
            <person name="Dalin E."/>
            <person name="Tice H."/>
            <person name="Bruce D."/>
            <person name="Goodwin L."/>
            <person name="Pitluck S."/>
            <person name="Kiss H."/>
            <person name="Brettin T."/>
            <person name="Detter J.C."/>
            <person name="Han C."/>
            <person name="Kuske C.R."/>
            <person name="Schmutz J."/>
            <person name="Larimer F."/>
            <person name="Land M."/>
            <person name="Hauser L."/>
            <person name="Kyrpides N."/>
            <person name="Mikhailova N."/>
            <person name="Ingram L."/>
            <person name="Richardson P."/>
        </authorList>
    </citation>
    <scope>NUCLEOTIDE SEQUENCE [LARGE SCALE GENOMIC DNA]</scope>
    <source>
        <strain>ATCC 8739 / DSM 1576 / NBRC 3972 / NCIMB 8545 / WDCM 00012 / Crooks</strain>
    </source>
</reference>
<gene>
    <name evidence="1" type="primary">rph</name>
    <name type="ordered locus">EcolC_0068</name>
</gene>
<name>RNPH_ECOLC</name>
<proteinExistence type="inferred from homology"/>
<feature type="chain" id="PRO_1000082291" description="Ribonuclease PH">
    <location>
        <begin position="1"/>
        <end position="238"/>
    </location>
</feature>
<feature type="binding site" evidence="1">
    <location>
        <position position="86"/>
    </location>
    <ligand>
        <name>phosphate</name>
        <dbReference type="ChEBI" id="CHEBI:43474"/>
        <note>substrate</note>
    </ligand>
</feature>
<feature type="binding site" evidence="1">
    <location>
        <begin position="124"/>
        <end position="126"/>
    </location>
    <ligand>
        <name>phosphate</name>
        <dbReference type="ChEBI" id="CHEBI:43474"/>
        <note>substrate</note>
    </ligand>
</feature>
<organism>
    <name type="scientific">Escherichia coli (strain ATCC 8739 / DSM 1576 / NBRC 3972 / NCIMB 8545 / WDCM 00012 / Crooks)</name>
    <dbReference type="NCBI Taxonomy" id="481805"/>
    <lineage>
        <taxon>Bacteria</taxon>
        <taxon>Pseudomonadati</taxon>
        <taxon>Pseudomonadota</taxon>
        <taxon>Gammaproteobacteria</taxon>
        <taxon>Enterobacterales</taxon>
        <taxon>Enterobacteriaceae</taxon>
        <taxon>Escherichia</taxon>
    </lineage>
</organism>
<accession>B1IYV7</accession>
<keyword id="KW-0548">Nucleotidyltransferase</keyword>
<keyword id="KW-0694">RNA-binding</keyword>
<keyword id="KW-0698">rRNA processing</keyword>
<keyword id="KW-0808">Transferase</keyword>
<keyword id="KW-0819">tRNA processing</keyword>
<keyword id="KW-0820">tRNA-binding</keyword>
<comment type="function">
    <text evidence="1">Phosphorolytic 3'-5' exoribonuclease that plays an important role in tRNA 3'-end maturation. Removes nucleotide residues following the 3'-CCA terminus of tRNAs; can also add nucleotides to the ends of RNA molecules by using nucleoside diphosphates as substrates, but this may not be physiologically important. Probably plays a role in initiation of 16S rRNA degradation (leading to ribosome degradation) during starvation.</text>
</comment>
<comment type="catalytic activity">
    <reaction evidence="1">
        <text>tRNA(n+1) + phosphate = tRNA(n) + a ribonucleoside 5'-diphosphate</text>
        <dbReference type="Rhea" id="RHEA:10628"/>
        <dbReference type="Rhea" id="RHEA-COMP:17343"/>
        <dbReference type="Rhea" id="RHEA-COMP:17344"/>
        <dbReference type="ChEBI" id="CHEBI:43474"/>
        <dbReference type="ChEBI" id="CHEBI:57930"/>
        <dbReference type="ChEBI" id="CHEBI:173114"/>
        <dbReference type="EC" id="2.7.7.56"/>
    </reaction>
</comment>
<comment type="subunit">
    <text evidence="1">Homohexameric ring arranged as a trimer of dimers.</text>
</comment>
<comment type="similarity">
    <text evidence="1">Belongs to the RNase PH family.</text>
</comment>
<evidence type="ECO:0000255" key="1">
    <source>
        <dbReference type="HAMAP-Rule" id="MF_00564"/>
    </source>
</evidence>
<dbReference type="EC" id="2.7.7.56" evidence="1"/>
<dbReference type="EMBL" id="CP000946">
    <property type="protein sequence ID" value="ACA75754.1"/>
    <property type="molecule type" value="Genomic_DNA"/>
</dbReference>
<dbReference type="RefSeq" id="WP_001247089.1">
    <property type="nucleotide sequence ID" value="NZ_MTFT01000034.1"/>
</dbReference>
<dbReference type="SMR" id="B1IYV7"/>
<dbReference type="GeneID" id="75202212"/>
<dbReference type="KEGG" id="ecl:EcolC_0068"/>
<dbReference type="HOGENOM" id="CLU_050858_0_0_6"/>
<dbReference type="GO" id="GO:0000175">
    <property type="term" value="F:3'-5'-RNA exonuclease activity"/>
    <property type="evidence" value="ECO:0007669"/>
    <property type="project" value="UniProtKB-UniRule"/>
</dbReference>
<dbReference type="GO" id="GO:0000049">
    <property type="term" value="F:tRNA binding"/>
    <property type="evidence" value="ECO:0007669"/>
    <property type="project" value="UniProtKB-UniRule"/>
</dbReference>
<dbReference type="GO" id="GO:0009022">
    <property type="term" value="F:tRNA nucleotidyltransferase activity"/>
    <property type="evidence" value="ECO:0007669"/>
    <property type="project" value="UniProtKB-UniRule"/>
</dbReference>
<dbReference type="GO" id="GO:0016075">
    <property type="term" value="P:rRNA catabolic process"/>
    <property type="evidence" value="ECO:0007669"/>
    <property type="project" value="UniProtKB-UniRule"/>
</dbReference>
<dbReference type="GO" id="GO:0006364">
    <property type="term" value="P:rRNA processing"/>
    <property type="evidence" value="ECO:0007669"/>
    <property type="project" value="UniProtKB-KW"/>
</dbReference>
<dbReference type="GO" id="GO:0008033">
    <property type="term" value="P:tRNA processing"/>
    <property type="evidence" value="ECO:0007669"/>
    <property type="project" value="UniProtKB-UniRule"/>
</dbReference>
<dbReference type="CDD" id="cd11362">
    <property type="entry name" value="RNase_PH_bact"/>
    <property type="match status" value="1"/>
</dbReference>
<dbReference type="FunFam" id="3.30.230.70:FF:000003">
    <property type="entry name" value="Ribonuclease PH"/>
    <property type="match status" value="1"/>
</dbReference>
<dbReference type="Gene3D" id="3.30.230.70">
    <property type="entry name" value="GHMP Kinase, N-terminal domain"/>
    <property type="match status" value="1"/>
</dbReference>
<dbReference type="HAMAP" id="MF_00564">
    <property type="entry name" value="RNase_PH"/>
    <property type="match status" value="1"/>
</dbReference>
<dbReference type="InterPro" id="IPR001247">
    <property type="entry name" value="ExoRNase_PH_dom1"/>
</dbReference>
<dbReference type="InterPro" id="IPR015847">
    <property type="entry name" value="ExoRNase_PH_dom2"/>
</dbReference>
<dbReference type="InterPro" id="IPR036345">
    <property type="entry name" value="ExoRNase_PH_dom2_sf"/>
</dbReference>
<dbReference type="InterPro" id="IPR027408">
    <property type="entry name" value="PNPase/RNase_PH_dom_sf"/>
</dbReference>
<dbReference type="InterPro" id="IPR020568">
    <property type="entry name" value="Ribosomal_Su5_D2-typ_SF"/>
</dbReference>
<dbReference type="InterPro" id="IPR050080">
    <property type="entry name" value="RNase_PH"/>
</dbReference>
<dbReference type="InterPro" id="IPR002381">
    <property type="entry name" value="RNase_PH_bac-type"/>
</dbReference>
<dbReference type="InterPro" id="IPR018336">
    <property type="entry name" value="RNase_PH_CS"/>
</dbReference>
<dbReference type="NCBIfam" id="TIGR01966">
    <property type="entry name" value="RNasePH"/>
    <property type="match status" value="1"/>
</dbReference>
<dbReference type="PANTHER" id="PTHR11953">
    <property type="entry name" value="EXOSOME COMPLEX COMPONENT"/>
    <property type="match status" value="1"/>
</dbReference>
<dbReference type="PANTHER" id="PTHR11953:SF0">
    <property type="entry name" value="EXOSOME COMPLEX COMPONENT RRP41"/>
    <property type="match status" value="1"/>
</dbReference>
<dbReference type="Pfam" id="PF01138">
    <property type="entry name" value="RNase_PH"/>
    <property type="match status" value="1"/>
</dbReference>
<dbReference type="Pfam" id="PF03725">
    <property type="entry name" value="RNase_PH_C"/>
    <property type="match status" value="1"/>
</dbReference>
<dbReference type="SUPFAM" id="SSF55666">
    <property type="entry name" value="Ribonuclease PH domain 2-like"/>
    <property type="match status" value="1"/>
</dbReference>
<dbReference type="SUPFAM" id="SSF54211">
    <property type="entry name" value="Ribosomal protein S5 domain 2-like"/>
    <property type="match status" value="1"/>
</dbReference>
<dbReference type="PROSITE" id="PS01277">
    <property type="entry name" value="RIBONUCLEASE_PH"/>
    <property type="match status" value="1"/>
</dbReference>
<sequence>MRPAGRSNNQVRPVTLTRNYTKHAEGSVLVEFGDTKVLCTASIEEGVPRFLKGQGQGWITAEYGMLPRSTHTRNAREAAKGKQGGRTMEIQRLIARALRAAVDLKALGEFTITLDCDVLQADGGTRTASITGACVALADALQKLVENGKLKTNPMKGMVAAVSVGIVNGEAICDLEYVEDSAAETDMNVVMTEDGRIIEVQGTAEGEPFTHEELLTLLALARGGIESIVATQKAALAN</sequence>